<protein>
    <recommendedName>
        <fullName>Uncharacterized protein 046L</fullName>
    </recommendedName>
</protein>
<reference key="1">
    <citation type="journal article" date="2004" name="Virology">
        <title>Comparative genomic analyses of frog virus 3, type species of the genus Ranavirus (family Iridoviridae).</title>
        <authorList>
            <person name="Tan W.G."/>
            <person name="Barkman T.J."/>
            <person name="Gregory Chinchar V."/>
            <person name="Essani K."/>
        </authorList>
    </citation>
    <scope>NUCLEOTIDE SEQUENCE [LARGE SCALE GENOMIC DNA]</scope>
</reference>
<name>046L_FRG3G</name>
<accession>Q6GZT0</accession>
<feature type="chain" id="PRO_0000410563" description="Uncharacterized protein 046L">
    <location>
        <begin position="1"/>
        <end position="81"/>
    </location>
</feature>
<feature type="region of interest" description="Disordered" evidence="1">
    <location>
        <begin position="46"/>
        <end position="81"/>
    </location>
</feature>
<feature type="compositionally biased region" description="Basic residues" evidence="1">
    <location>
        <begin position="51"/>
        <end position="73"/>
    </location>
</feature>
<organism>
    <name type="scientific">Frog virus 3 (isolate Goorha)</name>
    <name type="common">FV-3</name>
    <dbReference type="NCBI Taxonomy" id="654924"/>
    <lineage>
        <taxon>Viruses</taxon>
        <taxon>Varidnaviria</taxon>
        <taxon>Bamfordvirae</taxon>
        <taxon>Nucleocytoviricota</taxon>
        <taxon>Megaviricetes</taxon>
        <taxon>Pimascovirales</taxon>
        <taxon>Iridoviridae</taxon>
        <taxon>Alphairidovirinae</taxon>
        <taxon>Ranavirus</taxon>
        <taxon>Frog virus 3</taxon>
    </lineage>
</organism>
<keyword id="KW-1185">Reference proteome</keyword>
<organismHost>
    <name type="scientific">Dryophytes versicolor</name>
    <name type="common">chameleon treefrog</name>
    <dbReference type="NCBI Taxonomy" id="30343"/>
</organismHost>
<organismHost>
    <name type="scientific">Lithobates pipiens</name>
    <name type="common">Northern leopard frog</name>
    <name type="synonym">Rana pipiens</name>
    <dbReference type="NCBI Taxonomy" id="8404"/>
</organismHost>
<organismHost>
    <name type="scientific">Lithobates sylvaticus</name>
    <name type="common">Wood frog</name>
    <name type="synonym">Rana sylvatica</name>
    <dbReference type="NCBI Taxonomy" id="45438"/>
</organismHost>
<organismHost>
    <name type="scientific">Notophthalmus viridescens</name>
    <name type="common">Eastern newt</name>
    <name type="synonym">Triturus viridescens</name>
    <dbReference type="NCBI Taxonomy" id="8316"/>
</organismHost>
<proteinExistence type="predicted"/>
<sequence>MYSVRNSGCSVGCSPRQGASPIMFGPSLGAMLSAPVVRASAPVVRASSPVVKRKSLVKRKSPVKRSPLKKRSQMRTSPCEA</sequence>
<gene>
    <name type="ORF">FV3-046L</name>
</gene>
<evidence type="ECO:0000256" key="1">
    <source>
        <dbReference type="SAM" id="MobiDB-lite"/>
    </source>
</evidence>
<dbReference type="EMBL" id="AY548484">
    <property type="protein sequence ID" value="AAT09705.1"/>
    <property type="molecule type" value="Genomic_DNA"/>
</dbReference>
<dbReference type="RefSeq" id="YP_031624.1">
    <property type="nucleotide sequence ID" value="NC_005946.1"/>
</dbReference>
<dbReference type="KEGG" id="vg:2947825"/>
<dbReference type="Proteomes" id="UP000008770">
    <property type="component" value="Segment"/>
</dbReference>